<accession>Q4ZPK9</accession>
<evidence type="ECO:0000255" key="1">
    <source>
        <dbReference type="HAMAP-Rule" id="MF_00146"/>
    </source>
</evidence>
<dbReference type="EC" id="3.5.4.13" evidence="1"/>
<dbReference type="EMBL" id="CP000075">
    <property type="protein sequence ID" value="AAY38913.1"/>
    <property type="molecule type" value="Genomic_DNA"/>
</dbReference>
<dbReference type="RefSeq" id="WP_002554836.1">
    <property type="nucleotide sequence ID" value="NC_007005.1"/>
</dbReference>
<dbReference type="RefSeq" id="YP_236951.1">
    <property type="nucleotide sequence ID" value="NC_007005.1"/>
</dbReference>
<dbReference type="SMR" id="Q4ZPK9"/>
<dbReference type="STRING" id="205918.Psyr_3883"/>
<dbReference type="GeneID" id="96220367"/>
<dbReference type="KEGG" id="psb:Psyr_3883"/>
<dbReference type="PATRIC" id="fig|205918.7.peg.3994"/>
<dbReference type="eggNOG" id="COG0717">
    <property type="taxonomic scope" value="Bacteria"/>
</dbReference>
<dbReference type="HOGENOM" id="CLU_087476_4_0_6"/>
<dbReference type="OrthoDB" id="9780956at2"/>
<dbReference type="UniPathway" id="UPA00610">
    <property type="reaction ID" value="UER00665"/>
</dbReference>
<dbReference type="Proteomes" id="UP000000426">
    <property type="component" value="Chromosome"/>
</dbReference>
<dbReference type="GO" id="GO:0008829">
    <property type="term" value="F:dCTP deaminase activity"/>
    <property type="evidence" value="ECO:0007669"/>
    <property type="project" value="UniProtKB-UniRule"/>
</dbReference>
<dbReference type="GO" id="GO:0000166">
    <property type="term" value="F:nucleotide binding"/>
    <property type="evidence" value="ECO:0007669"/>
    <property type="project" value="UniProtKB-KW"/>
</dbReference>
<dbReference type="GO" id="GO:0006226">
    <property type="term" value="P:dUMP biosynthetic process"/>
    <property type="evidence" value="ECO:0007669"/>
    <property type="project" value="UniProtKB-UniPathway"/>
</dbReference>
<dbReference type="GO" id="GO:0006229">
    <property type="term" value="P:dUTP biosynthetic process"/>
    <property type="evidence" value="ECO:0007669"/>
    <property type="project" value="UniProtKB-UniRule"/>
</dbReference>
<dbReference type="GO" id="GO:0015949">
    <property type="term" value="P:nucleobase-containing small molecule interconversion"/>
    <property type="evidence" value="ECO:0007669"/>
    <property type="project" value="TreeGrafter"/>
</dbReference>
<dbReference type="CDD" id="cd07557">
    <property type="entry name" value="trimeric_dUTPase"/>
    <property type="match status" value="1"/>
</dbReference>
<dbReference type="FunFam" id="2.70.40.10:FF:000001">
    <property type="entry name" value="dCTP deaminase"/>
    <property type="match status" value="1"/>
</dbReference>
<dbReference type="Gene3D" id="2.70.40.10">
    <property type="match status" value="1"/>
</dbReference>
<dbReference type="HAMAP" id="MF_00146">
    <property type="entry name" value="dCTP_deaminase"/>
    <property type="match status" value="1"/>
</dbReference>
<dbReference type="InterPro" id="IPR011962">
    <property type="entry name" value="dCTP_deaminase"/>
</dbReference>
<dbReference type="InterPro" id="IPR036157">
    <property type="entry name" value="dUTPase-like_sf"/>
</dbReference>
<dbReference type="InterPro" id="IPR033704">
    <property type="entry name" value="dUTPase_trimeric"/>
</dbReference>
<dbReference type="NCBIfam" id="TIGR02274">
    <property type="entry name" value="dCTP_deam"/>
    <property type="match status" value="1"/>
</dbReference>
<dbReference type="PANTHER" id="PTHR42680">
    <property type="entry name" value="DCTP DEAMINASE"/>
    <property type="match status" value="1"/>
</dbReference>
<dbReference type="PANTHER" id="PTHR42680:SF3">
    <property type="entry name" value="DCTP DEAMINASE"/>
    <property type="match status" value="1"/>
</dbReference>
<dbReference type="Pfam" id="PF22769">
    <property type="entry name" value="DCD"/>
    <property type="match status" value="1"/>
</dbReference>
<dbReference type="SUPFAM" id="SSF51283">
    <property type="entry name" value="dUTPase-like"/>
    <property type="match status" value="1"/>
</dbReference>
<keyword id="KW-0378">Hydrolase</keyword>
<keyword id="KW-0546">Nucleotide metabolism</keyword>
<keyword id="KW-0547">Nucleotide-binding</keyword>
<comment type="function">
    <text evidence="1">Catalyzes the deamination of dCTP to dUTP.</text>
</comment>
<comment type="catalytic activity">
    <reaction evidence="1">
        <text>dCTP + H2O + H(+) = dUTP + NH4(+)</text>
        <dbReference type="Rhea" id="RHEA:22680"/>
        <dbReference type="ChEBI" id="CHEBI:15377"/>
        <dbReference type="ChEBI" id="CHEBI:15378"/>
        <dbReference type="ChEBI" id="CHEBI:28938"/>
        <dbReference type="ChEBI" id="CHEBI:61481"/>
        <dbReference type="ChEBI" id="CHEBI:61555"/>
        <dbReference type="EC" id="3.5.4.13"/>
    </reaction>
</comment>
<comment type="pathway">
    <text evidence="1">Pyrimidine metabolism; dUMP biosynthesis; dUMP from dCTP (dUTP route): step 1/2.</text>
</comment>
<comment type="subunit">
    <text evidence="1">Homotrimer.</text>
</comment>
<comment type="similarity">
    <text evidence="1">Belongs to the dCTP deaminase family.</text>
</comment>
<reference key="1">
    <citation type="journal article" date="2005" name="Proc. Natl. Acad. Sci. U.S.A.">
        <title>Comparison of the complete genome sequences of Pseudomonas syringae pv. syringae B728a and pv. tomato DC3000.</title>
        <authorList>
            <person name="Feil H."/>
            <person name="Feil W.S."/>
            <person name="Chain P."/>
            <person name="Larimer F."/>
            <person name="Dibartolo G."/>
            <person name="Copeland A."/>
            <person name="Lykidis A."/>
            <person name="Trong S."/>
            <person name="Nolan M."/>
            <person name="Goltsman E."/>
            <person name="Thiel J."/>
            <person name="Malfatti S."/>
            <person name="Loper J.E."/>
            <person name="Lapidus A."/>
            <person name="Detter J.C."/>
            <person name="Land M."/>
            <person name="Richardson P.M."/>
            <person name="Kyrpides N.C."/>
            <person name="Ivanova N."/>
            <person name="Lindow S.E."/>
        </authorList>
    </citation>
    <scope>NUCLEOTIDE SEQUENCE [LARGE SCALE GENOMIC DNA]</scope>
    <source>
        <strain>B728a</strain>
    </source>
</reference>
<proteinExistence type="inferred from homology"/>
<name>DCD_PSEU2</name>
<sequence length="188" mass="21248">MSIKSDKWIRRMAQEHGMIEPFVERQVRGEGADRVISFGVSSYGYDVRCADEFKVFTNINSATVDPKNFDEKSFVDIKSDVCIIPPNSFALARTVEYFRIPRNVLTICLGKSTYARCGIIVNVTPLEPEWEGHVTLEFSNTTTLPAKIYANEGVAQMLFLESDEECEVSYKDRGGKYQGQRGVTLPRT</sequence>
<gene>
    <name evidence="1" type="primary">dcd</name>
    <name type="ordered locus">Psyr_3883</name>
</gene>
<organism>
    <name type="scientific">Pseudomonas syringae pv. syringae (strain B728a)</name>
    <dbReference type="NCBI Taxonomy" id="205918"/>
    <lineage>
        <taxon>Bacteria</taxon>
        <taxon>Pseudomonadati</taxon>
        <taxon>Pseudomonadota</taxon>
        <taxon>Gammaproteobacteria</taxon>
        <taxon>Pseudomonadales</taxon>
        <taxon>Pseudomonadaceae</taxon>
        <taxon>Pseudomonas</taxon>
        <taxon>Pseudomonas syringae</taxon>
    </lineage>
</organism>
<protein>
    <recommendedName>
        <fullName evidence="1">dCTP deaminase</fullName>
        <ecNumber evidence="1">3.5.4.13</ecNumber>
    </recommendedName>
    <alternativeName>
        <fullName evidence="1">Deoxycytidine triphosphate deaminase</fullName>
    </alternativeName>
</protein>
<feature type="chain" id="PRO_1000009789" description="dCTP deaminase">
    <location>
        <begin position="1"/>
        <end position="188"/>
    </location>
</feature>
<feature type="active site" description="Proton donor/acceptor" evidence="1">
    <location>
        <position position="137"/>
    </location>
</feature>
<feature type="binding site" evidence="1">
    <location>
        <begin position="111"/>
        <end position="116"/>
    </location>
    <ligand>
        <name>dCTP</name>
        <dbReference type="ChEBI" id="CHEBI:61481"/>
    </ligand>
</feature>
<feature type="binding site" evidence="1">
    <location>
        <begin position="135"/>
        <end position="137"/>
    </location>
    <ligand>
        <name>dCTP</name>
        <dbReference type="ChEBI" id="CHEBI:61481"/>
    </ligand>
</feature>
<feature type="binding site" evidence="1">
    <location>
        <position position="156"/>
    </location>
    <ligand>
        <name>dCTP</name>
        <dbReference type="ChEBI" id="CHEBI:61481"/>
    </ligand>
</feature>
<feature type="binding site" evidence="1">
    <location>
        <position position="170"/>
    </location>
    <ligand>
        <name>dCTP</name>
        <dbReference type="ChEBI" id="CHEBI:61481"/>
    </ligand>
</feature>
<feature type="binding site" evidence="1">
    <location>
        <position position="180"/>
    </location>
    <ligand>
        <name>dCTP</name>
        <dbReference type="ChEBI" id="CHEBI:61481"/>
    </ligand>
</feature>